<reference key="1">
    <citation type="journal article" date="2007" name="PLoS Genet.">
        <title>Being pathogenic, plastic, and sexual while living with a nearly minimal bacterial genome.</title>
        <authorList>
            <person name="Sirand-Pugnet P."/>
            <person name="Lartigue C."/>
            <person name="Marenda M."/>
            <person name="Jacob D."/>
            <person name="Barre A."/>
            <person name="Barbe V."/>
            <person name="Schenowitz C."/>
            <person name="Mangenot S."/>
            <person name="Couloux A."/>
            <person name="Segurens B."/>
            <person name="de Daruvar A."/>
            <person name="Blanchard A."/>
            <person name="Citti C."/>
        </authorList>
    </citation>
    <scope>NUCLEOTIDE SEQUENCE [LARGE SCALE GENOMIC DNA]</scope>
    <source>
        <strain>NCTC 10123 / CIP 59.7 / PG2</strain>
    </source>
</reference>
<name>RS3_MYCAP</name>
<feature type="chain" id="PRO_1000140991" description="Small ribosomal subunit protein uS3">
    <location>
        <begin position="1"/>
        <end position="216"/>
    </location>
</feature>
<feature type="domain" description="KH type-2" evidence="1">
    <location>
        <begin position="39"/>
        <end position="111"/>
    </location>
</feature>
<sequence length="216" mass="24105">MGQKVNPNGFRYGITKPINSVWFAEKQNYGDLLVQDAKIYKFFDKLVRKYQIGNTSIKRTKAQKVTVVLQTSQPAKLLGENGANIEKITQDLHKYLKNKSLDINLQVSLLKQPELNARLAAEAIAQKLENRESFRVAQKLVINDALRAGAKGIKTQVSGRLNGVDMARAEGYSSGEMRLHTLRQDVDFAKATARTIYGAIGVKVWISKGELLEGDK</sequence>
<dbReference type="EMBL" id="CU179680">
    <property type="protein sequence ID" value="CAL59239.1"/>
    <property type="molecule type" value="Genomic_DNA"/>
</dbReference>
<dbReference type="RefSeq" id="WP_011949701.1">
    <property type="nucleotide sequence ID" value="NC_009497.1"/>
</dbReference>
<dbReference type="SMR" id="A5IYY0"/>
<dbReference type="STRING" id="347257.MAG5400"/>
<dbReference type="GeneID" id="93358284"/>
<dbReference type="KEGG" id="maa:MAG5400"/>
<dbReference type="HOGENOM" id="CLU_058591_0_2_14"/>
<dbReference type="Proteomes" id="UP000007065">
    <property type="component" value="Chromosome"/>
</dbReference>
<dbReference type="GO" id="GO:0022627">
    <property type="term" value="C:cytosolic small ribosomal subunit"/>
    <property type="evidence" value="ECO:0007669"/>
    <property type="project" value="TreeGrafter"/>
</dbReference>
<dbReference type="GO" id="GO:0003729">
    <property type="term" value="F:mRNA binding"/>
    <property type="evidence" value="ECO:0007669"/>
    <property type="project" value="UniProtKB-UniRule"/>
</dbReference>
<dbReference type="GO" id="GO:0019843">
    <property type="term" value="F:rRNA binding"/>
    <property type="evidence" value="ECO:0007669"/>
    <property type="project" value="UniProtKB-UniRule"/>
</dbReference>
<dbReference type="GO" id="GO:0003735">
    <property type="term" value="F:structural constituent of ribosome"/>
    <property type="evidence" value="ECO:0007669"/>
    <property type="project" value="InterPro"/>
</dbReference>
<dbReference type="GO" id="GO:0006412">
    <property type="term" value="P:translation"/>
    <property type="evidence" value="ECO:0007669"/>
    <property type="project" value="UniProtKB-UniRule"/>
</dbReference>
<dbReference type="CDD" id="cd02412">
    <property type="entry name" value="KH-II_30S_S3"/>
    <property type="match status" value="1"/>
</dbReference>
<dbReference type="FunFam" id="3.30.300.20:FF:000001">
    <property type="entry name" value="30S ribosomal protein S3"/>
    <property type="match status" value="1"/>
</dbReference>
<dbReference type="Gene3D" id="3.30.300.20">
    <property type="match status" value="1"/>
</dbReference>
<dbReference type="Gene3D" id="3.30.1140.32">
    <property type="entry name" value="Ribosomal protein S3, C-terminal domain"/>
    <property type="match status" value="1"/>
</dbReference>
<dbReference type="HAMAP" id="MF_01309_B">
    <property type="entry name" value="Ribosomal_uS3_B"/>
    <property type="match status" value="1"/>
</dbReference>
<dbReference type="InterPro" id="IPR004087">
    <property type="entry name" value="KH_dom"/>
</dbReference>
<dbReference type="InterPro" id="IPR015946">
    <property type="entry name" value="KH_dom-like_a/b"/>
</dbReference>
<dbReference type="InterPro" id="IPR004044">
    <property type="entry name" value="KH_dom_type_2"/>
</dbReference>
<dbReference type="InterPro" id="IPR009019">
    <property type="entry name" value="KH_sf_prok-type"/>
</dbReference>
<dbReference type="InterPro" id="IPR036419">
    <property type="entry name" value="Ribosomal_S3_C_sf"/>
</dbReference>
<dbReference type="InterPro" id="IPR005704">
    <property type="entry name" value="Ribosomal_uS3_bac-typ"/>
</dbReference>
<dbReference type="InterPro" id="IPR001351">
    <property type="entry name" value="Ribosomal_uS3_C"/>
</dbReference>
<dbReference type="InterPro" id="IPR018280">
    <property type="entry name" value="Ribosomal_uS3_CS"/>
</dbReference>
<dbReference type="NCBIfam" id="TIGR01009">
    <property type="entry name" value="rpsC_bact"/>
    <property type="match status" value="1"/>
</dbReference>
<dbReference type="PANTHER" id="PTHR11760">
    <property type="entry name" value="30S/40S RIBOSOMAL PROTEIN S3"/>
    <property type="match status" value="1"/>
</dbReference>
<dbReference type="PANTHER" id="PTHR11760:SF19">
    <property type="entry name" value="SMALL RIBOSOMAL SUBUNIT PROTEIN US3C"/>
    <property type="match status" value="1"/>
</dbReference>
<dbReference type="Pfam" id="PF07650">
    <property type="entry name" value="KH_2"/>
    <property type="match status" value="1"/>
</dbReference>
<dbReference type="Pfam" id="PF00189">
    <property type="entry name" value="Ribosomal_S3_C"/>
    <property type="match status" value="1"/>
</dbReference>
<dbReference type="SMART" id="SM00322">
    <property type="entry name" value="KH"/>
    <property type="match status" value="1"/>
</dbReference>
<dbReference type="SUPFAM" id="SSF54814">
    <property type="entry name" value="Prokaryotic type KH domain (KH-domain type II)"/>
    <property type="match status" value="1"/>
</dbReference>
<dbReference type="SUPFAM" id="SSF54821">
    <property type="entry name" value="Ribosomal protein S3 C-terminal domain"/>
    <property type="match status" value="1"/>
</dbReference>
<dbReference type="PROSITE" id="PS50823">
    <property type="entry name" value="KH_TYPE_2"/>
    <property type="match status" value="1"/>
</dbReference>
<dbReference type="PROSITE" id="PS00548">
    <property type="entry name" value="RIBOSOMAL_S3"/>
    <property type="match status" value="1"/>
</dbReference>
<evidence type="ECO:0000255" key="1">
    <source>
        <dbReference type="HAMAP-Rule" id="MF_01309"/>
    </source>
</evidence>
<evidence type="ECO:0000305" key="2"/>
<keyword id="KW-1185">Reference proteome</keyword>
<keyword id="KW-0687">Ribonucleoprotein</keyword>
<keyword id="KW-0689">Ribosomal protein</keyword>
<keyword id="KW-0694">RNA-binding</keyword>
<keyword id="KW-0699">rRNA-binding</keyword>
<proteinExistence type="inferred from homology"/>
<comment type="function">
    <text evidence="1">Binds the lower part of the 30S subunit head. Binds mRNA in the 70S ribosome, positioning it for translation.</text>
</comment>
<comment type="subunit">
    <text evidence="1">Part of the 30S ribosomal subunit. Forms a tight complex with proteins S10 and S14.</text>
</comment>
<comment type="similarity">
    <text evidence="1">Belongs to the universal ribosomal protein uS3 family.</text>
</comment>
<protein>
    <recommendedName>
        <fullName evidence="1">Small ribosomal subunit protein uS3</fullName>
    </recommendedName>
    <alternativeName>
        <fullName evidence="2">30S ribosomal protein S3</fullName>
    </alternativeName>
</protein>
<gene>
    <name evidence="1" type="primary">rpsC</name>
    <name type="ordered locus">MAG5400</name>
</gene>
<organism>
    <name type="scientific">Mycoplasmopsis agalactiae (strain NCTC 10123 / CIP 59.7 / PG2)</name>
    <name type="common">Mycoplasma agalactiae</name>
    <dbReference type="NCBI Taxonomy" id="347257"/>
    <lineage>
        <taxon>Bacteria</taxon>
        <taxon>Bacillati</taxon>
        <taxon>Mycoplasmatota</taxon>
        <taxon>Mycoplasmoidales</taxon>
        <taxon>Metamycoplasmataceae</taxon>
        <taxon>Mycoplasmopsis</taxon>
    </lineage>
</organism>
<accession>A5IYY0</accession>